<gene>
    <name type="primary">Rtn4r</name>
    <name type="synonym">Ngr1</name>
    <name type="synonym">Nogor</name>
</gene>
<evidence type="ECO:0000250" key="1">
    <source>
        <dbReference type="UniProtKB" id="Q99M75"/>
    </source>
</evidence>
<evidence type="ECO:0000250" key="2">
    <source>
        <dbReference type="UniProtKB" id="Q9BZR6"/>
    </source>
</evidence>
<evidence type="ECO:0000255" key="3"/>
<evidence type="ECO:0000256" key="4">
    <source>
        <dbReference type="SAM" id="MobiDB-lite"/>
    </source>
</evidence>
<evidence type="ECO:0000269" key="5">
    <source>
    </source>
</evidence>
<evidence type="ECO:0000269" key="6">
    <source>
    </source>
</evidence>
<evidence type="ECO:0000269" key="7">
    <source>
    </source>
</evidence>
<evidence type="ECO:0000269" key="8">
    <source>
    </source>
</evidence>
<evidence type="ECO:0000269" key="9">
    <source>
    </source>
</evidence>
<evidence type="ECO:0000269" key="10">
    <source>
    </source>
</evidence>
<evidence type="ECO:0000269" key="11">
    <source>
    </source>
</evidence>
<evidence type="ECO:0000269" key="12">
    <source>
    </source>
</evidence>
<evidence type="ECO:0000269" key="13">
    <source>
    </source>
</evidence>
<evidence type="ECO:0000269" key="14">
    <source>
    </source>
</evidence>
<evidence type="ECO:0000269" key="15">
    <source>
    </source>
</evidence>
<evidence type="ECO:0000269" key="16">
    <source>
    </source>
</evidence>
<evidence type="ECO:0000269" key="17">
    <source>
    </source>
</evidence>
<evidence type="ECO:0000269" key="18">
    <source>
    </source>
</evidence>
<evidence type="ECO:0000303" key="19">
    <source>
    </source>
</evidence>
<evidence type="ECO:0000303" key="20">
    <source>
    </source>
</evidence>
<evidence type="ECO:0000305" key="21"/>
<evidence type="ECO:0007744" key="22">
    <source>
        <dbReference type="PDB" id="5O0K"/>
    </source>
</evidence>
<evidence type="ECO:0007744" key="23">
    <source>
        <dbReference type="PDB" id="5O0L"/>
    </source>
</evidence>
<evidence type="ECO:0007744" key="24">
    <source>
        <dbReference type="PDB" id="5O0M"/>
    </source>
</evidence>
<evidence type="ECO:0007744" key="25">
    <source>
        <dbReference type="PDB" id="5O0N"/>
    </source>
</evidence>
<evidence type="ECO:0007744" key="26">
    <source>
        <dbReference type="PDB" id="5O0O"/>
    </source>
</evidence>
<evidence type="ECO:0007744" key="27">
    <source>
        <dbReference type="PDB" id="5O0P"/>
    </source>
</evidence>
<evidence type="ECO:0007744" key="28">
    <source>
        <dbReference type="PDB" id="5O0Q"/>
    </source>
</evidence>
<evidence type="ECO:0007744" key="29">
    <source>
        <dbReference type="PDB" id="5O0R"/>
    </source>
</evidence>
<evidence type="ECO:0007829" key="30">
    <source>
        <dbReference type="PDB" id="5O0K"/>
    </source>
</evidence>
<evidence type="ECO:0007829" key="31">
    <source>
        <dbReference type="PDB" id="5O0M"/>
    </source>
</evidence>
<evidence type="ECO:0007829" key="32">
    <source>
        <dbReference type="PDB" id="5O0O"/>
    </source>
</evidence>
<evidence type="ECO:0007829" key="33">
    <source>
        <dbReference type="PDB" id="7R86"/>
    </source>
</evidence>
<reference key="1">
    <citation type="journal article" date="2001" name="Nature">
        <title>Identification of a receptor mediating Nogo-66 inhibition of axonal regeneration.</title>
        <authorList>
            <person name="Fournier A.E."/>
            <person name="GrandPre T."/>
            <person name="Strittmatter S.M."/>
        </authorList>
    </citation>
    <scope>NUCLEOTIDE SEQUENCE [MRNA]</scope>
    <scope>FUNCTION</scope>
    <scope>SUBCELLULAR LOCATION</scope>
    <scope>TISSUE SPECIFICITY</scope>
    <source>
        <strain>Swiss Webster</strain>
    </source>
</reference>
<reference key="2">
    <citation type="journal article" date="2004" name="Genome Res.">
        <title>The status, quality, and expansion of the NIH full-length cDNA project: the Mammalian Gene Collection (MGC).</title>
        <authorList>
            <consortium name="The MGC Project Team"/>
        </authorList>
    </citation>
    <scope>NUCLEOTIDE SEQUENCE [LARGE SCALE MRNA]</scope>
    <source>
        <strain>C57BL/6J</strain>
        <tissue>Brain</tissue>
        <tissue>Colon</tissue>
    </source>
</reference>
<reference key="3">
    <citation type="journal article" date="2002" name="J. Neurosci. Res.">
        <title>Nogos and the Nogo-66 receptor: factors inhibiting CNS neuron regeneration.</title>
        <authorList>
            <person name="Ng C.E.L."/>
            <person name="Tang B.L."/>
        </authorList>
    </citation>
    <scope>REVIEW</scope>
</reference>
<reference key="4">
    <citation type="journal article" date="2002" name="Science">
        <title>Myelin-associated glycoprotein as a functional ligand for the Nogo-66 receptor.</title>
        <authorList>
            <person name="Liu B.P."/>
            <person name="Fournier A."/>
            <person name="GrandPre T."/>
            <person name="Strittmatter S.M."/>
        </authorList>
    </citation>
    <scope>INTERACTION WITH MAG</scope>
    <scope>FUNCTION</scope>
</reference>
<reference key="5">
    <citation type="journal article" date="2004" name="Neuron">
        <title>Nogo-66 receptor prevents raphespinal and rubrospinal axon regeneration and limits functional recovery from spinal cord injury.</title>
        <authorList>
            <person name="Kim J.E."/>
            <person name="Liu B.P."/>
            <person name="Park J.H."/>
            <person name="Strittmatter S.M."/>
        </authorList>
    </citation>
    <scope>DISRUPTION PHENOTYPE</scope>
    <scope>FUNCTION</scope>
    <scope>INTERACTION WITH RTN4</scope>
    <scope>TISSUE SPECIFICITY</scope>
</reference>
<reference key="6">
    <citation type="journal article" date="2005" name="Proc. Natl. Acad. Sci. U.S.A.">
        <title>Genetic deletion of the Nogo receptor does not reduce neurite inhibition in vitro or promote corticospinal tract regeneration in vivo.</title>
        <authorList>
            <person name="Zheng B."/>
            <person name="Atwal J."/>
            <person name="Ho C."/>
            <person name="Case L."/>
            <person name="He X.L."/>
            <person name="Garcia K.C."/>
            <person name="Steward O."/>
            <person name="Tessier-Lavigne M."/>
        </authorList>
    </citation>
    <scope>DISRUPTION PHENOTYPE</scope>
</reference>
<reference key="7">
    <citation type="journal article" date="2008" name="J. Biol. Chem.">
        <title>Ganglioside inhibition of neurite outgrowth requires Nogo receptor function: identification of interaction sites and development of novel antagonists.</title>
        <authorList>
            <person name="Williams G."/>
            <person name="Wood A."/>
            <person name="Williams E.J."/>
            <person name="Gao Y."/>
            <person name="Mercado M.L."/>
            <person name="Katz A."/>
            <person name="Joseph-McCarthy D."/>
            <person name="Bates B."/>
            <person name="Ling H.P."/>
            <person name="Aulabaugh A."/>
            <person name="Zaccardi J."/>
            <person name="Xie Y."/>
            <person name="Pangalos M.N."/>
            <person name="Walsh F.S."/>
            <person name="Doherty P."/>
        </authorList>
    </citation>
    <scope>FUNCTION</scope>
    <scope>DISRUPTION PHENOTYPE</scope>
</reference>
<reference key="8">
    <citation type="journal article" date="2008" name="J. Neurosci.">
        <title>Genetic variants of Nogo-66 receptor with possible association to schizophrenia block myelin inhibition of axon growth.</title>
        <authorList>
            <person name="Budel S."/>
            <person name="Padukkavidana T."/>
            <person name="Liu B.P."/>
            <person name="Feng Z."/>
            <person name="Hu F."/>
            <person name="Johnson S."/>
            <person name="Lauren J."/>
            <person name="Park J.H."/>
            <person name="McGee A.W."/>
            <person name="Liao J."/>
            <person name="Stillman A."/>
            <person name="Kim J.E."/>
            <person name="Yang B.Z."/>
            <person name="Sodi S."/>
            <person name="Gelernter J."/>
            <person name="Zhao H."/>
            <person name="Hisama F."/>
            <person name="Arnsten A.F."/>
            <person name="Strittmatter S.M."/>
        </authorList>
    </citation>
    <scope>DISRUPTION PHENOTYPE</scope>
</reference>
<reference key="9">
    <citation type="journal article" date="2009" name="PLoS ONE">
        <title>Inhibitory activity of myelin-associated glycoprotein on sensory neurons is largely independent of NgR1 and NgR2 and resides within Ig-Like domains 4 and 5.</title>
        <authorList>
            <person name="Woerter V."/>
            <person name="Schweigreiter R."/>
            <person name="Kinzel B."/>
            <person name="Mueller M."/>
            <person name="Barske C."/>
            <person name="Boeck G."/>
            <person name="Frentzel S."/>
            <person name="Bandtlow C.E."/>
        </authorList>
    </citation>
    <scope>DISRUPTION PHENOTYPE</scope>
</reference>
<reference key="10">
    <citation type="journal article" date="2010" name="Cereb. Cortex">
        <title>Nogo-a regulates neural precursor migration in the embryonic mouse cortex.</title>
        <authorList>
            <person name="Mathis C."/>
            <person name="Schroeter A."/>
            <person name="Thallmair M."/>
            <person name="Schwab M.E."/>
        </authorList>
    </citation>
    <scope>FUNCTION</scope>
</reference>
<reference key="11">
    <citation type="journal article" date="2012" name="J. Biol. Chem.">
        <title>Olfactomedin 1 interacts with the Nogo A receptor complex to regulate axon growth.</title>
        <authorList>
            <person name="Nakaya N."/>
            <person name="Sultana A."/>
            <person name="Lee H.S."/>
            <person name="Tomarev S.I."/>
        </authorList>
    </citation>
    <scope>FUNCTION</scope>
    <scope>INTERACTION WITH MAG; OLFM1; LINGO1 AND NGFR</scope>
    <scope>TISSUE SPECIFICITY</scope>
</reference>
<reference key="12">
    <citation type="journal article" date="2012" name="Nat. Neurosci.">
        <title>NgR1 and NgR3 are receptors for chondroitin sulfate proteoglycans.</title>
        <authorList>
            <person name="Dickendesher T.L."/>
            <person name="Baldwin K.T."/>
            <person name="Mironova Y.A."/>
            <person name="Koriyama Y."/>
            <person name="Raiker S.J."/>
            <person name="Askew K.L."/>
            <person name="Wood A."/>
            <person name="Geoffroy C.G."/>
            <person name="Zheng B."/>
            <person name="Liepmann C.D."/>
            <person name="Katagiri Y."/>
            <person name="Benowitz L.I."/>
            <person name="Geller H.M."/>
            <person name="Giger R.J."/>
        </authorList>
    </citation>
    <scope>DISRUPTION PHENOTYPE</scope>
    <scope>FUNCTION</scope>
</reference>
<reference key="13">
    <citation type="journal article" date="2012" name="Neuron">
        <title>The Nogo receptor family restricts synapse number in the developing hippocampus.</title>
        <authorList>
            <person name="Wills Z.P."/>
            <person name="Mandel-Brehm C."/>
            <person name="Mardinly A.R."/>
            <person name="McCord A.E."/>
            <person name="Giger R.J."/>
            <person name="Greenberg M.E."/>
        </authorList>
    </citation>
    <scope>DISRUPTION PHENOTYPE</scope>
    <scope>FUNCTION</scope>
    <scope>SUBCELLULAR LOCATION</scope>
    <scope>TISSUE SPECIFICITY</scope>
</reference>
<reference key="14">
    <citation type="journal article" date="2015" name="Cell Death Dis.">
        <title>Myelin-associated glycoprotein modulates apoptosis of motoneurons during early postnatal development via NgR/p75(NTR) receptor-mediated activation of RhoA signaling pathways.</title>
        <authorList>
            <person name="Palandri A."/>
            <person name="Salvador V.R."/>
            <person name="Wojnacki J."/>
            <person name="Vivinetto A.L."/>
            <person name="Schnaar R.L."/>
            <person name="Lopez P.H."/>
        </authorList>
    </citation>
    <scope>DISRUPTION PHENOTYPE</scope>
    <scope>FUNCTION</scope>
</reference>
<reference key="15">
    <citation type="journal article" date="2017" name="J. Comp. Neurol.">
        <title>Agenesis of the corpus callosum in Nogo receptor deficient mice.</title>
        <authorList>
            <person name="Yoo S.W."/>
            <person name="Motari M.G."/>
            <person name="Schnaar R.L."/>
        </authorList>
    </citation>
    <scope>DISRUPTION PHENOTYPE</scope>
    <scope>FUNCTION</scope>
</reference>
<reference evidence="22 23 24 25 26 27 28 29" key="16">
    <citation type="journal article" date="2017" name="Acta Crystallogr. D">
        <title>Nogo Receptor crystal structures with a native disulfide pattern suggest a novel mode of self-interaction.</title>
        <authorList>
            <person name="Pronker M.F."/>
            <person name="Tas R.P."/>
            <person name="Vlieg H.C."/>
            <person name="Janssen B.J.C."/>
        </authorList>
    </citation>
    <scope>X-RAY CRYSTALLOGRAPHY (1.90 ANGSTROMS) OF 26-337</scope>
    <scope>SUBUNIT</scope>
    <scope>GLYCOSYLATION AT ASN-82; ASN-179 AND ASN-372</scope>
    <scope>DISULFIDE BONDS</scope>
</reference>
<sequence>MKRASSGGSRLLAWVLWLQAWRVATPCPGACVCYNEPKVTTSCPQQGLQAVPTGIPASSQRIFLHGNRISHVPAASFQSCRNLTILWLHSNALARIDAAAFTGLTLLEQLDLSDNAQLHVVDPTTFHGLGHLHTLHLDRCGLRELGPGLFRGLAALQYLYLQDNNLQALPDNTFRDLGNLTHLFLHGNRIPSVPEHAFRGLHSLDRLLLHQNHVARVHPHAFRDLGRLMTLYLFANNLSMLPAEVLMPLRSLQYLRLNDNPWVCDCRARPLWAWLQKFRGSSSEVPCNLPQRLADRDLKRLAASDLEGCAVASGPFRPIQTSQLTDEELLSLPKCCQPDAADKASVLEPGRPASAGNALKGRVPPGDTPPGNGSGPRHINDSPFGTLPSSAEPPLTALRPGGSEPPGLPTTGPRRRPGCSRKNRTRSHCRLGQAGSGASGTGDAEGSGALPALACSLAPLGLALVLWTVLGPC</sequence>
<name>RTN4R_MOUSE</name>
<keyword id="KW-0002">3D-structure</keyword>
<keyword id="KW-1003">Cell membrane</keyword>
<keyword id="KW-0966">Cell projection</keyword>
<keyword id="KW-1015">Disulfide bond</keyword>
<keyword id="KW-0325">Glycoprotein</keyword>
<keyword id="KW-0336">GPI-anchor</keyword>
<keyword id="KW-0358">Heparin-binding</keyword>
<keyword id="KW-0433">Leucine-rich repeat</keyword>
<keyword id="KW-0449">Lipoprotein</keyword>
<keyword id="KW-0472">Membrane</keyword>
<keyword id="KW-0675">Receptor</keyword>
<keyword id="KW-1185">Reference proteome</keyword>
<keyword id="KW-0677">Repeat</keyword>
<keyword id="KW-0732">Signal</keyword>
<organism>
    <name type="scientific">Mus musculus</name>
    <name type="common">Mouse</name>
    <dbReference type="NCBI Taxonomy" id="10090"/>
    <lineage>
        <taxon>Eukaryota</taxon>
        <taxon>Metazoa</taxon>
        <taxon>Chordata</taxon>
        <taxon>Craniata</taxon>
        <taxon>Vertebrata</taxon>
        <taxon>Euteleostomi</taxon>
        <taxon>Mammalia</taxon>
        <taxon>Eutheria</taxon>
        <taxon>Euarchontoglires</taxon>
        <taxon>Glires</taxon>
        <taxon>Rodentia</taxon>
        <taxon>Myomorpha</taxon>
        <taxon>Muroidea</taxon>
        <taxon>Muridae</taxon>
        <taxon>Murinae</taxon>
        <taxon>Mus</taxon>
        <taxon>Mus</taxon>
    </lineage>
</organism>
<accession>Q99PI8</accession>
<accession>Q80WQ1</accession>
<protein>
    <recommendedName>
        <fullName>Reticulon-4 receptor</fullName>
    </recommendedName>
    <alternativeName>
        <fullName>Nogo receptor</fullName>
        <shortName evidence="19">NgR</shortName>
    </alternativeName>
    <alternativeName>
        <fullName evidence="19">Nogo-66 receptor</fullName>
    </alternativeName>
    <alternativeName>
        <fullName evidence="20">Nogo66 receptor-1</fullName>
        <shortName evidence="20">NgR1</shortName>
    </alternativeName>
</protein>
<feature type="signal peptide" evidence="3">
    <location>
        <begin position="1"/>
        <end position="26"/>
    </location>
</feature>
<feature type="chain" id="PRO_0000022257" description="Reticulon-4 receptor">
    <location>
        <begin position="27"/>
        <end position="447"/>
    </location>
</feature>
<feature type="propeptide" id="PRO_0000022258" description="Removed in mature form" evidence="3">
    <location>
        <begin position="448"/>
        <end position="473"/>
    </location>
</feature>
<feature type="domain" description="LRRNT">
    <location>
        <begin position="27"/>
        <end position="57"/>
    </location>
</feature>
<feature type="repeat" description="LRR 1">
    <location>
        <begin position="58"/>
        <end position="79"/>
    </location>
</feature>
<feature type="repeat" description="LRR 2">
    <location>
        <begin position="82"/>
        <end position="103"/>
    </location>
</feature>
<feature type="repeat" description="LRR 3">
    <location>
        <begin position="106"/>
        <end position="128"/>
    </location>
</feature>
<feature type="repeat" description="LRR 4">
    <location>
        <begin position="131"/>
        <end position="152"/>
    </location>
</feature>
<feature type="repeat" description="LRR 5">
    <location>
        <begin position="155"/>
        <end position="176"/>
    </location>
</feature>
<feature type="repeat" description="LRR 6">
    <location>
        <begin position="179"/>
        <end position="200"/>
    </location>
</feature>
<feature type="repeat" description="LRR 7">
    <location>
        <begin position="203"/>
        <end position="224"/>
    </location>
</feature>
<feature type="repeat" description="LRR 8">
    <location>
        <begin position="227"/>
        <end position="248"/>
    </location>
</feature>
<feature type="domain" description="LRRCT">
    <location>
        <begin position="260"/>
        <end position="311"/>
    </location>
</feature>
<feature type="region of interest" description="Disordered" evidence="4">
    <location>
        <begin position="346"/>
        <end position="446"/>
    </location>
</feature>
<feature type="compositionally biased region" description="Basic residues" evidence="4">
    <location>
        <begin position="413"/>
        <end position="429"/>
    </location>
</feature>
<feature type="compositionally biased region" description="Gly residues" evidence="4">
    <location>
        <begin position="434"/>
        <end position="445"/>
    </location>
</feature>
<feature type="lipid moiety-binding region" description="GPI-anchor amidated serine" evidence="3">
    <location>
        <position position="447"/>
    </location>
</feature>
<feature type="glycosylation site" description="N-linked (GlcNAc...) asparagine" evidence="18 22 23 24 25 26 27 28 29">
    <location>
        <position position="82"/>
    </location>
</feature>
<feature type="glycosylation site" description="N-linked (GlcNAc...) asparagine" evidence="18 22 23 24 25 26 27 28 29">
    <location>
        <position position="179"/>
    </location>
</feature>
<feature type="glycosylation site" description="N-linked (GlcNAc...) asparagine" evidence="18 22 23 24 25 26 27 28 29">
    <location>
        <position position="372"/>
    </location>
</feature>
<feature type="disulfide bond" evidence="18 22 23 24 25 26 27 28 29">
    <location>
        <begin position="27"/>
        <end position="33"/>
    </location>
</feature>
<feature type="disulfide bond" evidence="18 22 23 24 25 26 27 28 29">
    <location>
        <begin position="31"/>
        <end position="43"/>
    </location>
</feature>
<feature type="disulfide bond" evidence="18 22 23 24 25 26 27 28 29">
    <location>
        <begin position="264"/>
        <end position="287"/>
    </location>
</feature>
<feature type="disulfide bond" evidence="18 22 23 24 25 26 27 28 29">
    <location>
        <begin position="266"/>
        <end position="335"/>
    </location>
</feature>
<feature type="disulfide bond" evidence="18 22 23 24 25 26 27 28 29">
    <location>
        <begin position="309"/>
        <end position="336"/>
    </location>
</feature>
<feature type="strand" evidence="33">
    <location>
        <begin position="32"/>
        <end position="34"/>
    </location>
</feature>
<feature type="strand" evidence="33">
    <location>
        <begin position="36"/>
        <end position="38"/>
    </location>
</feature>
<feature type="strand" evidence="33">
    <location>
        <begin position="40"/>
        <end position="42"/>
    </location>
</feature>
<feature type="strand" evidence="33">
    <location>
        <begin position="60"/>
        <end position="63"/>
    </location>
</feature>
<feature type="turn" evidence="33">
    <location>
        <begin position="74"/>
        <end position="79"/>
    </location>
</feature>
<feature type="strand" evidence="33">
    <location>
        <begin position="85"/>
        <end position="87"/>
    </location>
</feature>
<feature type="turn" evidence="33">
    <location>
        <begin position="98"/>
        <end position="103"/>
    </location>
</feature>
<feature type="strand" evidence="33">
    <location>
        <begin position="109"/>
        <end position="111"/>
    </location>
</feature>
<feature type="turn" evidence="33">
    <location>
        <begin position="123"/>
        <end position="128"/>
    </location>
</feature>
<feature type="strand" evidence="33">
    <location>
        <begin position="134"/>
        <end position="136"/>
    </location>
</feature>
<feature type="strand" evidence="30">
    <location>
        <begin position="138"/>
        <end position="140"/>
    </location>
</feature>
<feature type="turn" evidence="33">
    <location>
        <begin position="147"/>
        <end position="152"/>
    </location>
</feature>
<feature type="strand" evidence="33">
    <location>
        <begin position="158"/>
        <end position="160"/>
    </location>
</feature>
<feature type="turn" evidence="33">
    <location>
        <begin position="171"/>
        <end position="176"/>
    </location>
</feature>
<feature type="strand" evidence="33">
    <location>
        <begin position="182"/>
        <end position="184"/>
    </location>
</feature>
<feature type="turn" evidence="33">
    <location>
        <begin position="195"/>
        <end position="200"/>
    </location>
</feature>
<feature type="strand" evidence="33">
    <location>
        <begin position="206"/>
        <end position="208"/>
    </location>
</feature>
<feature type="turn" evidence="33">
    <location>
        <begin position="219"/>
        <end position="224"/>
    </location>
</feature>
<feature type="strand" evidence="33">
    <location>
        <begin position="230"/>
        <end position="232"/>
    </location>
</feature>
<feature type="turn" evidence="33">
    <location>
        <begin position="243"/>
        <end position="248"/>
    </location>
</feature>
<feature type="strand" evidence="33">
    <location>
        <begin position="254"/>
        <end position="256"/>
    </location>
</feature>
<feature type="helix" evidence="33">
    <location>
        <begin position="266"/>
        <end position="268"/>
    </location>
</feature>
<feature type="helix" evidence="33">
    <location>
        <begin position="269"/>
        <end position="277"/>
    </location>
</feature>
<feature type="strand" evidence="33">
    <location>
        <begin position="280"/>
        <end position="282"/>
    </location>
</feature>
<feature type="strand" evidence="33">
    <location>
        <begin position="286"/>
        <end position="290"/>
    </location>
</feature>
<feature type="helix" evidence="33">
    <location>
        <begin position="291"/>
        <end position="293"/>
    </location>
</feature>
<feature type="helix" evidence="33">
    <location>
        <begin position="298"/>
        <end position="300"/>
    </location>
</feature>
<feature type="helix" evidence="33">
    <location>
        <begin position="303"/>
        <end position="306"/>
    </location>
</feature>
<feature type="helix" evidence="32">
    <location>
        <begin position="321"/>
        <end position="323"/>
    </location>
</feature>
<feature type="helix" evidence="32">
    <location>
        <begin position="326"/>
        <end position="329"/>
    </location>
</feature>
<feature type="helix" evidence="31">
    <location>
        <begin position="334"/>
        <end position="336"/>
    </location>
</feature>
<dbReference type="EMBL" id="AF283462">
    <property type="protein sequence ID" value="AAG53611.1"/>
    <property type="molecule type" value="mRNA"/>
</dbReference>
<dbReference type="EMBL" id="BC052317">
    <property type="protein sequence ID" value="AAH52317.2"/>
    <property type="molecule type" value="mRNA"/>
</dbReference>
<dbReference type="EMBL" id="BC058381">
    <property type="protein sequence ID" value="AAH58381.1"/>
    <property type="molecule type" value="mRNA"/>
</dbReference>
<dbReference type="CCDS" id="CCDS37279.1"/>
<dbReference type="RefSeq" id="NP_075358.1">
    <property type="nucleotide sequence ID" value="NM_022982.3"/>
</dbReference>
<dbReference type="PDB" id="5O0K">
    <property type="method" value="X-ray"/>
    <property type="resolution" value="2.30 A"/>
    <property type="chains" value="A/B=27-337"/>
</dbReference>
<dbReference type="PDB" id="5O0L">
    <property type="method" value="X-ray"/>
    <property type="resolution" value="2.51 A"/>
    <property type="chains" value="A/B=27-337"/>
</dbReference>
<dbReference type="PDB" id="5O0M">
    <property type="method" value="X-ray"/>
    <property type="resolution" value="1.90 A"/>
    <property type="chains" value="A/B=26-337"/>
</dbReference>
<dbReference type="PDB" id="5O0N">
    <property type="method" value="X-ray"/>
    <property type="resolution" value="2.50 A"/>
    <property type="chains" value="A=27-337"/>
</dbReference>
<dbReference type="PDB" id="5O0O">
    <property type="method" value="X-ray"/>
    <property type="resolution" value="2.20 A"/>
    <property type="chains" value="A/B/C/D/E/F/G/H=27-337"/>
</dbReference>
<dbReference type="PDB" id="5O0P">
    <property type="method" value="X-ray"/>
    <property type="resolution" value="2.00 A"/>
    <property type="chains" value="A/B=26-348"/>
</dbReference>
<dbReference type="PDB" id="5O0Q">
    <property type="method" value="X-ray"/>
    <property type="resolution" value="2.50 A"/>
    <property type="chains" value="A/B/C/D=26-348"/>
</dbReference>
<dbReference type="PDB" id="5O0R">
    <property type="method" value="X-ray"/>
    <property type="resolution" value="2.50 A"/>
    <property type="chains" value="A/B=26-348"/>
</dbReference>
<dbReference type="PDB" id="7R86">
    <property type="method" value="X-ray"/>
    <property type="resolution" value="1.65 A"/>
    <property type="chains" value="A/B=27-309"/>
</dbReference>
<dbReference type="PDBsum" id="5O0K"/>
<dbReference type="PDBsum" id="5O0L"/>
<dbReference type="PDBsum" id="5O0M"/>
<dbReference type="PDBsum" id="5O0N"/>
<dbReference type="PDBsum" id="5O0O"/>
<dbReference type="PDBsum" id="5O0P"/>
<dbReference type="PDBsum" id="5O0Q"/>
<dbReference type="PDBsum" id="5O0R"/>
<dbReference type="PDBsum" id="7R86"/>
<dbReference type="SMR" id="Q99PI8"/>
<dbReference type="BioGRID" id="211123">
    <property type="interactions" value="2"/>
</dbReference>
<dbReference type="CORUM" id="Q99PI8"/>
<dbReference type="FunCoup" id="Q99PI8">
    <property type="interactions" value="376"/>
</dbReference>
<dbReference type="IntAct" id="Q99PI8">
    <property type="interactions" value="1"/>
</dbReference>
<dbReference type="MINT" id="Q99PI8"/>
<dbReference type="STRING" id="10090.ENSMUSP00000062924"/>
<dbReference type="GlyConnect" id="2681">
    <property type="glycosylation" value="1 N-Linked glycan (2 sites)"/>
</dbReference>
<dbReference type="GlyCosmos" id="Q99PI8">
    <property type="glycosylation" value="3 sites, 1 glycan"/>
</dbReference>
<dbReference type="GlyGen" id="Q99PI8">
    <property type="glycosylation" value="8 sites, 6 N-linked glycans (6 sites)"/>
</dbReference>
<dbReference type="iPTMnet" id="Q99PI8"/>
<dbReference type="PhosphoSitePlus" id="Q99PI8"/>
<dbReference type="SwissPalm" id="Q99PI8"/>
<dbReference type="PaxDb" id="10090-ENSMUSP00000062924"/>
<dbReference type="PeptideAtlas" id="Q99PI8"/>
<dbReference type="ProteomicsDB" id="256638"/>
<dbReference type="ABCD" id="Q99PI8">
    <property type="antibodies" value="1 sequenced antibody"/>
</dbReference>
<dbReference type="Antibodypedia" id="23162">
    <property type="antibodies" value="370 antibodies from 33 providers"/>
</dbReference>
<dbReference type="DNASU" id="65079"/>
<dbReference type="Ensembl" id="ENSMUST00000059589.6">
    <property type="protein sequence ID" value="ENSMUSP00000062924.6"/>
    <property type="gene ID" value="ENSMUSG00000043811.6"/>
</dbReference>
<dbReference type="GeneID" id="65079"/>
<dbReference type="KEGG" id="mmu:65079"/>
<dbReference type="UCSC" id="uc007ymv.1">
    <property type="organism name" value="mouse"/>
</dbReference>
<dbReference type="AGR" id="MGI:2136886"/>
<dbReference type="CTD" id="65078"/>
<dbReference type="MGI" id="MGI:2136886">
    <property type="gene designation" value="Rtn4r"/>
</dbReference>
<dbReference type="VEuPathDB" id="HostDB:ENSMUSG00000043811"/>
<dbReference type="eggNOG" id="KOG0619">
    <property type="taxonomic scope" value="Eukaryota"/>
</dbReference>
<dbReference type="GeneTree" id="ENSGT00940000160711"/>
<dbReference type="HOGENOM" id="CLU_000288_18_6_1"/>
<dbReference type="InParanoid" id="Q99PI8"/>
<dbReference type="OMA" id="RSQCRMA"/>
<dbReference type="OrthoDB" id="546383at2759"/>
<dbReference type="PhylomeDB" id="Q99PI8"/>
<dbReference type="TreeFam" id="TF330080"/>
<dbReference type="BioGRID-ORCS" id="65079">
    <property type="hits" value="2 hits in 79 CRISPR screens"/>
</dbReference>
<dbReference type="CD-CODE" id="CE726F99">
    <property type="entry name" value="Postsynaptic density"/>
</dbReference>
<dbReference type="PRO" id="PR:Q99PI8"/>
<dbReference type="Proteomes" id="UP000000589">
    <property type="component" value="Chromosome 16"/>
</dbReference>
<dbReference type="RNAct" id="Q99PI8">
    <property type="molecule type" value="protein"/>
</dbReference>
<dbReference type="Bgee" id="ENSMUSG00000043811">
    <property type="expression patterns" value="Expressed in primary visual cortex and 112 other cell types or tissues"/>
</dbReference>
<dbReference type="GO" id="GO:0044295">
    <property type="term" value="C:axonal growth cone"/>
    <property type="evidence" value="ECO:0000314"/>
    <property type="project" value="UniProtKB"/>
</dbReference>
<dbReference type="GO" id="GO:0009986">
    <property type="term" value="C:cell surface"/>
    <property type="evidence" value="ECO:0000314"/>
    <property type="project" value="UniProtKB"/>
</dbReference>
<dbReference type="GO" id="GO:0043198">
    <property type="term" value="C:dendritic shaft"/>
    <property type="evidence" value="ECO:0000314"/>
    <property type="project" value="UniProtKB"/>
</dbReference>
<dbReference type="GO" id="GO:0005783">
    <property type="term" value="C:endoplasmic reticulum"/>
    <property type="evidence" value="ECO:0007669"/>
    <property type="project" value="Ensembl"/>
</dbReference>
<dbReference type="GO" id="GO:0009897">
    <property type="term" value="C:external side of plasma membrane"/>
    <property type="evidence" value="ECO:0000250"/>
    <property type="project" value="UniProtKB"/>
</dbReference>
<dbReference type="GO" id="GO:0098978">
    <property type="term" value="C:glutamatergic synapse"/>
    <property type="evidence" value="ECO:0000314"/>
    <property type="project" value="SynGO"/>
</dbReference>
<dbReference type="GO" id="GO:0030426">
    <property type="term" value="C:growth cone"/>
    <property type="evidence" value="ECO:0000314"/>
    <property type="project" value="MGI"/>
</dbReference>
<dbReference type="GO" id="GO:0045121">
    <property type="term" value="C:membrane raft"/>
    <property type="evidence" value="ECO:0000250"/>
    <property type="project" value="UniProtKB"/>
</dbReference>
<dbReference type="GO" id="GO:0043005">
    <property type="term" value="C:neuron projection"/>
    <property type="evidence" value="ECO:0000314"/>
    <property type="project" value="UniProtKB"/>
</dbReference>
<dbReference type="GO" id="GO:0043025">
    <property type="term" value="C:neuronal cell body"/>
    <property type="evidence" value="ECO:0000314"/>
    <property type="project" value="UniProtKB"/>
</dbReference>
<dbReference type="GO" id="GO:0043204">
    <property type="term" value="C:perikaryon"/>
    <property type="evidence" value="ECO:0007669"/>
    <property type="project" value="UniProtKB-SubCell"/>
</dbReference>
<dbReference type="GO" id="GO:0005886">
    <property type="term" value="C:plasma membrane"/>
    <property type="evidence" value="ECO:0000314"/>
    <property type="project" value="UniProtKB"/>
</dbReference>
<dbReference type="GO" id="GO:0035374">
    <property type="term" value="F:chondroitin sulfate binding"/>
    <property type="evidence" value="ECO:0000314"/>
    <property type="project" value="UniProtKB"/>
</dbReference>
<dbReference type="GO" id="GO:1905573">
    <property type="term" value="F:ganglioside GM1 binding"/>
    <property type="evidence" value="ECO:0000250"/>
    <property type="project" value="UniProtKB"/>
</dbReference>
<dbReference type="GO" id="GO:1905576">
    <property type="term" value="F:ganglioside GT1b binding"/>
    <property type="evidence" value="ECO:0000250"/>
    <property type="project" value="UniProtKB"/>
</dbReference>
<dbReference type="GO" id="GO:0008201">
    <property type="term" value="F:heparin binding"/>
    <property type="evidence" value="ECO:0000314"/>
    <property type="project" value="UniProtKB"/>
</dbReference>
<dbReference type="GO" id="GO:0038131">
    <property type="term" value="F:neuregulin receptor activity"/>
    <property type="evidence" value="ECO:0000314"/>
    <property type="project" value="UniProtKB"/>
</dbReference>
<dbReference type="GO" id="GO:0007409">
    <property type="term" value="P:axonogenesis"/>
    <property type="evidence" value="ECO:0000314"/>
    <property type="project" value="MGI"/>
</dbReference>
<dbReference type="GO" id="GO:0007166">
    <property type="term" value="P:cell surface receptor signaling pathway"/>
    <property type="evidence" value="ECO:0000250"/>
    <property type="project" value="UniProtKB"/>
</dbReference>
<dbReference type="GO" id="GO:0022038">
    <property type="term" value="P:corpus callosum development"/>
    <property type="evidence" value="ECO:0000315"/>
    <property type="project" value="UniProtKB"/>
</dbReference>
<dbReference type="GO" id="GO:0030517">
    <property type="term" value="P:negative regulation of axon extension"/>
    <property type="evidence" value="ECO:0000314"/>
    <property type="project" value="UniProtKB"/>
</dbReference>
<dbReference type="GO" id="GO:0048681">
    <property type="term" value="P:negative regulation of axon regeneration"/>
    <property type="evidence" value="ECO:0000315"/>
    <property type="project" value="UniProtKB"/>
</dbReference>
<dbReference type="GO" id="GO:0010977">
    <property type="term" value="P:negative regulation of neuron projection development"/>
    <property type="evidence" value="ECO:0000315"/>
    <property type="project" value="UniProtKB"/>
</dbReference>
<dbReference type="GO" id="GO:0023041">
    <property type="term" value="P:neuronal signal transduction"/>
    <property type="evidence" value="ECO:0000314"/>
    <property type="project" value="UniProtKB"/>
</dbReference>
<dbReference type="GO" id="GO:0043547">
    <property type="term" value="P:positive regulation of GTPase activity"/>
    <property type="evidence" value="ECO:0000314"/>
    <property type="project" value="UniProtKB"/>
</dbReference>
<dbReference type="GO" id="GO:0035025">
    <property type="term" value="P:positive regulation of Rho protein signal transduction"/>
    <property type="evidence" value="ECO:0000250"/>
    <property type="project" value="UniProtKB"/>
</dbReference>
<dbReference type="GO" id="GO:0150052">
    <property type="term" value="P:regulation of postsynapse assembly"/>
    <property type="evidence" value="ECO:0000314"/>
    <property type="project" value="SynGO"/>
</dbReference>
<dbReference type="GO" id="GO:0051963">
    <property type="term" value="P:regulation of synapse assembly"/>
    <property type="evidence" value="ECO:0000314"/>
    <property type="project" value="SynGO"/>
</dbReference>
<dbReference type="FunFam" id="3.80.10.10:FF:000018">
    <property type="entry name" value="Reticulon 4 receptor"/>
    <property type="match status" value="1"/>
</dbReference>
<dbReference type="Gene3D" id="3.80.10.10">
    <property type="entry name" value="Ribonuclease Inhibitor"/>
    <property type="match status" value="1"/>
</dbReference>
<dbReference type="InterPro" id="IPR001611">
    <property type="entry name" value="Leu-rich_rpt"/>
</dbReference>
<dbReference type="InterPro" id="IPR003591">
    <property type="entry name" value="Leu-rich_rpt_typical-subtyp"/>
</dbReference>
<dbReference type="InterPro" id="IPR032675">
    <property type="entry name" value="LRR_dom_sf"/>
</dbReference>
<dbReference type="InterPro" id="IPR050541">
    <property type="entry name" value="LRR_TM_domain-containing"/>
</dbReference>
<dbReference type="PANTHER" id="PTHR24369">
    <property type="entry name" value="ANTIGEN BSP, PUTATIVE-RELATED"/>
    <property type="match status" value="1"/>
</dbReference>
<dbReference type="PANTHER" id="PTHR24369:SF174">
    <property type="entry name" value="RETICULON-4 RECEPTOR"/>
    <property type="match status" value="1"/>
</dbReference>
<dbReference type="Pfam" id="PF13855">
    <property type="entry name" value="LRR_8"/>
    <property type="match status" value="2"/>
</dbReference>
<dbReference type="SMART" id="SM00369">
    <property type="entry name" value="LRR_TYP"/>
    <property type="match status" value="8"/>
</dbReference>
<dbReference type="SUPFAM" id="SSF52058">
    <property type="entry name" value="L domain-like"/>
    <property type="match status" value="1"/>
</dbReference>
<dbReference type="PROSITE" id="PS51450">
    <property type="entry name" value="LRR"/>
    <property type="match status" value="8"/>
</dbReference>
<proteinExistence type="evidence at protein level"/>
<comment type="function">
    <text evidence="2 5 6 7 12 13 14 15 16 17">Receptor for RTN4, OMG and MAG (PubMed:11201742, PubMed:12089450, PubMed:15504325, PubMed:18411262, PubMed:22923615). Functions as a receptor for the sialylated gangliosides GT1b and GM1 (PubMed:18411262). Besides, functions as a receptor for chondroitin sulfate proteoglycans (PubMed:22406547). Can also bind heparin (PubMed:22406547). Intracellular signaling cascades are triggered via the coreceptor NGFR (By similarity). Signaling mediates activation of Rho and downstream reorganization of the actin cytoskeleton (PubMed:22325200). Mediates axonal growth inhibition (By similarity). Mediates axonal growth inhibition and plays a role in regulating axon regeneration and neuronal plasticity in the adult central nervous system (PubMed:11201742, PubMed:12089450, PubMed:15504325, PubMed:22923615). Plays a role in postnatal brain development (PubMed:27339102). Required for normal axon migration across the brain midline and normal formation of the corpus callosum (PubMed:27339102). Protects motoneurons against apoptosis; protection against apoptosis is probably mediated via interaction with MAG (PubMed:26335717). Acts in conjunction with RTN4 and LINGO1 in regulating neuronal precursor cell motility during cortical development (PubMed:20093372). Like other family members, plays a role in restricting the number dendritic spines and the number of synapses that are formed during brain development (PubMed:22325200).</text>
</comment>
<comment type="subunit">
    <text evidence="1 2 6 7 15 18">Homodimer (PubMed:29095159). Interacts with MAG (PubMed:12089450). Interacts with RTN4 (PubMed:15504325). Interacts with NGFR (PubMed:22923615). Interacts with LINGO1 (PubMed:22923615). Interacts with KIAA0319L (By similarity). Interacts with OLFM1; this inhibits interaction with LINGO1 and NGFR (PubMed:22923615). Interacts with OMG (By similarity).</text>
</comment>
<comment type="subcellular location">
    <subcellularLocation>
        <location evidence="5 13">Cell membrane</location>
        <topology evidence="5">Lipid-anchor</topology>
        <topology evidence="5">GPI-anchor</topology>
    </subcellularLocation>
    <subcellularLocation>
        <location evidence="2">Membrane raft</location>
    </subcellularLocation>
    <subcellularLocation>
        <location evidence="13">Cell projection</location>
        <location evidence="13">Dendrite</location>
    </subcellularLocation>
    <subcellularLocation>
        <location evidence="13">Cell projection</location>
        <location evidence="13">Axon</location>
    </subcellularLocation>
    <subcellularLocation>
        <location evidence="1">Perikaryon</location>
    </subcellularLocation>
    <text evidence="13">Detected along dendrites and axons, close to synapses, but clearly excluded from synapses.</text>
</comment>
<comment type="tissue specificity">
    <text evidence="5 7 8 13 14 15">Detected in embryonic hippocampus neurons (PubMed:22325200). Detected in brain (at protein level) (PubMed:15504325, PubMed:22406547). Detected in neurons in the neocortex, in hippocampus, dorsal thalamus, cerebellum granule cell layer and the mitral cell layer in the olfactory bulb (PubMed:15647357). Detected in brain, dorsal root ganglion and heart.</text>
</comment>
<comment type="PTM">
    <text evidence="1 18">N-glycosylated (PubMed:29095159). O-glycosylated. Contains terminal sialic acid groups on its glycan chains (By similarity).</text>
</comment>
<comment type="disruption phenotype">
    <text evidence="7 8 9 10 11 13 14 16 17">Mice are born at the expected Mendelian rate, are viable and fertile (PubMed:15504325, PubMed:15647357). They display subtle changes in exploratory behavior, manifest deficits in spatial working memory performance, and show impaired ability to stay on a rotarod (PubMed:15504325, PubMed:19052207). Compared to wild-type littermates, cultured hippocampus neurons from mutant mice display an increased number of excitatory synapses (PubMed:22325200). Effects on neurite outgrowth are controversial and may depend on the mouse strain, cell type, and the experimental conditions (PubMed:15504325, PubMed:15647357, PubMed:18411262, PubMed:19367338). Cultured neurons display impaired axon growth cone collapse in response to myelin, MAG and RTN4 (PubMed:15504325). Mutant cerebellar and dorsal root ganglion neurons show no decrease of the inhibition of neurite outgrowth by myelin or RTN4 (PubMed:15647357). Mutant cerebellar neurons display decreased inhibition of neurite outgrowth mediated by MAG and by cross-linking ganglioside GT1b (in vitro) (PubMed:18411262). Likewise, mutant sensory neurons show no decrease of the inhibition of neurite outgrowth by MAG (PubMed:19367338). Mutant mice have improved functional recovery and increased regeneration of rubrospinal and raphespinal fibers after spinal cord transection. Still, there is no regeneration of corticospinal fibers (PubMed:15504325, PubMed:15647357). Mice lacking both Rtn4r and Rtn4rl2 display no visible phenotype (PubMed:19367338). Sensory neurons from mice lacking both Rtn4r and Rtn4rl2 show moderately decreased inhibition of neurite outgrowth by MAG (PubMed:19367338). Mice with a triple gene disruption that lack Rtn4r, Rtn4rl1 and Rtn4rl2 have no visible phenotype, are healthy and viable (PubMed:22406547). Mice with a triple gene disruption that lack Rtn4r, Rtn4rl1 and Rtn4rl2 have normal brain size and grossly normal brain anatomy, but display disruption of medial brain structures, including an absence of the fasciola cinereum, corpus callosum agenesis and formation of bilateral Probst bundles indicative of the failure of callosally projecting neurons to extend across the midline (PubMed:27339102). Mice with a triple gene disruption of Rtn4r, Rtn4rl1 and Rtn4rl2 display impaired ability to stay on a rotarod and increased spontaneous locomotion (PubMed:27339102). These mice display an increased number of excitatory synapses in the apical dendritic regions of hippocampus neurons, an increase in the complexity of dendrite structure and increased total dendrite length (PubMed:22325200). One month after birth, mice with a triple gene disruption that lack Rtn4r, Rtn4rl1 and Rtn4rl2 show a significant reduction in the survival of motoneurons (PubMed:26335717). Compared to wild-type or single mutants, cerebellar granule cells from mice lacking Rtn4r, Rtn4rl1 and Rtn4rl2 show decreased myelin-mediated inhibition of neurite outgrowth, an inhibition that is strongly decreased on myelin deficient in Mag, Rtn4 and Omg (PubMed:22406547). Mice lacking both Rtn4r and Rtn4rl1 show increased axon regeneration after injury; the same effect is observed when Rtn4r, Rtn4rl1 and Rtn4rl2 are disrupted (PubMed:22406547). Combined disruption of Rtn4r, Rtn4rl1 and Ptprs further increases axon regeneration after injury (PubMed:22406547). Single gene disruption of Rtn4r, Rtn4rl1 and Rtn4rl2 and combined disruption of Rtn4r and Rtn4rl2 have no effect on axon regeneration (PubMed:22406547).</text>
</comment>
<comment type="similarity">
    <text evidence="21">Belongs to the Nogo receptor family.</text>
</comment>
<comment type="online information" name="Protein Spotlight">
    <link uri="https://www.proteinspotlight.org/back_issues/069"/>
    <text>Nerve regrowth: nipped by a no-go - Issue 69 of April 2006</text>
</comment>